<keyword id="KW-0997">Cell inner membrane</keyword>
<keyword id="KW-1003">Cell membrane</keyword>
<keyword id="KW-0175">Coiled coil</keyword>
<keyword id="KW-0963">Cytoplasm</keyword>
<keyword id="KW-0472">Membrane</keyword>
<organism>
    <name type="scientific">Escherichia coli (strain SMS-3-5 / SECEC)</name>
    <dbReference type="NCBI Taxonomy" id="439855"/>
    <lineage>
        <taxon>Bacteria</taxon>
        <taxon>Pseudomonadati</taxon>
        <taxon>Pseudomonadota</taxon>
        <taxon>Gammaproteobacteria</taxon>
        <taxon>Enterobacterales</taxon>
        <taxon>Enterobacteriaceae</taxon>
        <taxon>Escherichia</taxon>
    </lineage>
</organism>
<name>HFLD_ECOSM</name>
<sequence length="213" mass="22934">MAKNYYDITLALAGICQSARLVQQLAHQGHCDGDALHVSLNSIIDMNPSSTLAVFGGSEANLRVGLETLLGVLNASSRQGLNAELTRYTLSLMVLERKLSSAKGALDTLGNRINGLQRQLEHFDLQSETLMSAMAAIYVDVISPLGPRIQVTGSPAVLQSPQVQAKVRATLLAGIRAAVLWHQVGGGRLQLMFSRNRLTTQAKQILAHLTPEL</sequence>
<evidence type="ECO:0000255" key="1">
    <source>
        <dbReference type="HAMAP-Rule" id="MF_00695"/>
    </source>
</evidence>
<accession>B1LI11</accession>
<comment type="function">
    <text evidence="1">Negative regulator of phage lambda lysogenization. Contributes to the degradation of the phage regulatory protein CII. Acts probably by holding CII on the membrane surface, away from the target promoters, but close to the FtsH protease.</text>
</comment>
<comment type="subunit">
    <text evidence="1">Interacts with CII protein from phage lambda.</text>
</comment>
<comment type="subcellular location">
    <subcellularLocation>
        <location>Cytoplasm</location>
    </subcellularLocation>
    <subcellularLocation>
        <location evidence="1">Cell inner membrane</location>
        <topology evidence="1">Peripheral membrane protein</topology>
        <orientation evidence="1">Cytoplasmic side</orientation>
    </subcellularLocation>
</comment>
<comment type="similarity">
    <text evidence="1">Belongs to the HflD family.</text>
</comment>
<gene>
    <name evidence="1" type="primary">hflD</name>
    <name type="ordered locus">EcSMS35_1993</name>
</gene>
<proteinExistence type="inferred from homology"/>
<dbReference type="EMBL" id="CP000970">
    <property type="protein sequence ID" value="ACB17949.1"/>
    <property type="molecule type" value="Genomic_DNA"/>
</dbReference>
<dbReference type="RefSeq" id="WP_001295971.1">
    <property type="nucleotide sequence ID" value="NC_010498.1"/>
</dbReference>
<dbReference type="SMR" id="B1LI11"/>
<dbReference type="KEGG" id="ecm:EcSMS35_1993"/>
<dbReference type="HOGENOM" id="CLU_098920_0_0_6"/>
<dbReference type="Proteomes" id="UP000007011">
    <property type="component" value="Chromosome"/>
</dbReference>
<dbReference type="GO" id="GO:0005737">
    <property type="term" value="C:cytoplasm"/>
    <property type="evidence" value="ECO:0007669"/>
    <property type="project" value="UniProtKB-SubCell"/>
</dbReference>
<dbReference type="GO" id="GO:0005886">
    <property type="term" value="C:plasma membrane"/>
    <property type="evidence" value="ECO:0007669"/>
    <property type="project" value="UniProtKB-SubCell"/>
</dbReference>
<dbReference type="FunFam" id="1.10.3890.10:FF:000001">
    <property type="entry name" value="High frequency lysogenization protein HflD homolog"/>
    <property type="match status" value="1"/>
</dbReference>
<dbReference type="Gene3D" id="1.10.3890.10">
    <property type="entry name" value="HflD-like"/>
    <property type="match status" value="1"/>
</dbReference>
<dbReference type="HAMAP" id="MF_00695">
    <property type="entry name" value="HflD_protein"/>
    <property type="match status" value="1"/>
</dbReference>
<dbReference type="InterPro" id="IPR007451">
    <property type="entry name" value="HflD"/>
</dbReference>
<dbReference type="InterPro" id="IPR035932">
    <property type="entry name" value="HflD-like_sf"/>
</dbReference>
<dbReference type="NCBIfam" id="NF001245">
    <property type="entry name" value="PRK00218.1-1"/>
    <property type="match status" value="1"/>
</dbReference>
<dbReference type="NCBIfam" id="NF001246">
    <property type="entry name" value="PRK00218.1-2"/>
    <property type="match status" value="1"/>
</dbReference>
<dbReference type="NCBIfam" id="NF001248">
    <property type="entry name" value="PRK00218.1-4"/>
    <property type="match status" value="1"/>
</dbReference>
<dbReference type="NCBIfam" id="NF001249">
    <property type="entry name" value="PRK00218.1-5"/>
    <property type="match status" value="1"/>
</dbReference>
<dbReference type="PANTHER" id="PTHR38100">
    <property type="entry name" value="HIGH FREQUENCY LYSOGENIZATION PROTEIN HFLD"/>
    <property type="match status" value="1"/>
</dbReference>
<dbReference type="PANTHER" id="PTHR38100:SF1">
    <property type="entry name" value="HIGH FREQUENCY LYSOGENIZATION PROTEIN HFLD"/>
    <property type="match status" value="1"/>
</dbReference>
<dbReference type="Pfam" id="PF04356">
    <property type="entry name" value="DUF489"/>
    <property type="match status" value="1"/>
</dbReference>
<dbReference type="SUPFAM" id="SSF101322">
    <property type="entry name" value="YcfC-like"/>
    <property type="match status" value="1"/>
</dbReference>
<reference key="1">
    <citation type="journal article" date="2008" name="J. Bacteriol.">
        <title>Insights into the environmental resistance gene pool from the genome sequence of the multidrug-resistant environmental isolate Escherichia coli SMS-3-5.</title>
        <authorList>
            <person name="Fricke W.F."/>
            <person name="Wright M.S."/>
            <person name="Lindell A.H."/>
            <person name="Harkins D.M."/>
            <person name="Baker-Austin C."/>
            <person name="Ravel J."/>
            <person name="Stepanauskas R."/>
        </authorList>
    </citation>
    <scope>NUCLEOTIDE SEQUENCE [LARGE SCALE GENOMIC DNA]</scope>
    <source>
        <strain>SMS-3-5 / SECEC</strain>
    </source>
</reference>
<protein>
    <recommendedName>
        <fullName evidence="1">High frequency lysogenization protein HflD</fullName>
    </recommendedName>
</protein>
<feature type="chain" id="PRO_1000132289" description="High frequency lysogenization protein HflD">
    <location>
        <begin position="1"/>
        <end position="213"/>
    </location>
</feature>
<feature type="coiled-coil region" evidence="1">
    <location>
        <begin position="79"/>
        <end position="126"/>
    </location>
</feature>